<gene>
    <name evidence="5" type="primary">caaB</name>
    <name type="ORF">An08g03740</name>
</gene>
<feature type="chain" id="PRO_0000462133" description="Trans-enoyl reductase caaB">
    <location>
        <begin position="1"/>
        <end position="366"/>
    </location>
</feature>
<feature type="domain" description="Enoyl reductase (ER)" evidence="3">
    <location>
        <begin position="19"/>
        <end position="363"/>
    </location>
</feature>
<feature type="binding site" evidence="2">
    <location>
        <position position="219"/>
    </location>
    <ligand>
        <name>NADP(+)</name>
        <dbReference type="ChEBI" id="CHEBI:58349"/>
    </ligand>
</feature>
<sequence>MPSATPVIPSQQTAIVAEGAGQLSIYHDAPVPALQPDVALVKTAAVAINPVDAKMLDYSPVPGAIHGYDFAGTIVALGSDTPPHLKVGDRVAGFVHGMNPLLPDVGAFAEYVAASADLVLKLPDTMSFEEGASLGLGLFTAGLGLFQHLQIPLSLTREPSPEASSPTKADFVLVAGGSTATGTRALQLLKLAGLRPVATCSPAHFDLARRFGAEAVFDYHDPDCAAAIRAYTKNTLAYALDCLALAETTQLCYGALGRAGGRYVTLEPFREAIAAQRPHTVTPSWLLALTIFGRKVALDGEYGREANPEDREFGARLTEQVQGLLDEGKVDVHPVRVMGGGWQGVLEGVDLVRRQTVSGHKLVYAV</sequence>
<reference key="1">
    <citation type="journal article" date="2007" name="Nat. Biotechnol.">
        <title>Genome sequencing and analysis of the versatile cell factory Aspergillus niger CBS 513.88.</title>
        <authorList>
            <person name="Pel H.J."/>
            <person name="de Winde J.H."/>
            <person name="Archer D.B."/>
            <person name="Dyer P.S."/>
            <person name="Hofmann G."/>
            <person name="Schaap P.J."/>
            <person name="Turner G."/>
            <person name="de Vries R.P."/>
            <person name="Albang R."/>
            <person name="Albermann K."/>
            <person name="Andersen M.R."/>
            <person name="Bendtsen J.D."/>
            <person name="Benen J.A.E."/>
            <person name="van den Berg M."/>
            <person name="Breestraat S."/>
            <person name="Caddick M.X."/>
            <person name="Contreras R."/>
            <person name="Cornell M."/>
            <person name="Coutinho P.M."/>
            <person name="Danchin E.G.J."/>
            <person name="Debets A.J.M."/>
            <person name="Dekker P."/>
            <person name="van Dijck P.W.M."/>
            <person name="van Dijk A."/>
            <person name="Dijkhuizen L."/>
            <person name="Driessen A.J.M."/>
            <person name="d'Enfert C."/>
            <person name="Geysens S."/>
            <person name="Goosen C."/>
            <person name="Groot G.S.P."/>
            <person name="de Groot P.W.J."/>
            <person name="Guillemette T."/>
            <person name="Henrissat B."/>
            <person name="Herweijer M."/>
            <person name="van den Hombergh J.P.T.W."/>
            <person name="van den Hondel C.A.M.J.J."/>
            <person name="van der Heijden R.T.J.M."/>
            <person name="van der Kaaij R.M."/>
            <person name="Klis F.M."/>
            <person name="Kools H.J."/>
            <person name="Kubicek C.P."/>
            <person name="van Kuyk P.A."/>
            <person name="Lauber J."/>
            <person name="Lu X."/>
            <person name="van der Maarel M.J.E.C."/>
            <person name="Meulenberg R."/>
            <person name="Menke H."/>
            <person name="Mortimer M.A."/>
            <person name="Nielsen J."/>
            <person name="Oliver S.G."/>
            <person name="Olsthoorn M."/>
            <person name="Pal K."/>
            <person name="van Peij N.N.M.E."/>
            <person name="Ram A.F.J."/>
            <person name="Rinas U."/>
            <person name="Roubos J.A."/>
            <person name="Sagt C.M.J."/>
            <person name="Schmoll M."/>
            <person name="Sun J."/>
            <person name="Ussery D."/>
            <person name="Varga J."/>
            <person name="Vervecken W."/>
            <person name="van de Vondervoort P.J.J."/>
            <person name="Wedler H."/>
            <person name="Woesten H.A.B."/>
            <person name="Zeng A.-P."/>
            <person name="van Ooyen A.J.J."/>
            <person name="Visser J."/>
            <person name="Stam H."/>
        </authorList>
    </citation>
    <scope>NUCLEOTIDE SEQUENCE [LARGE SCALE GENOMIC DNA]</scope>
    <source>
        <strain>ATCC MYA-4892 / CBS 513.88 / FGSC A1513</strain>
    </source>
</reference>
<reference key="2">
    <citation type="journal article" date="2014" name="ChemBioChem">
        <title>Three acyltetronic acid derivatives: noncanonical cryptic polyketides from Aspergillus niger identified by genome mining.</title>
        <authorList>
            <person name="Yang X.L."/>
            <person name="Awakawa T."/>
            <person name="Wakimoto T."/>
            <person name="Abe I."/>
        </authorList>
    </citation>
    <scope>FUNCTION</scope>
    <scope>CATALYTIC ACTIVITY</scope>
    <scope>INDUCTION</scope>
    <scope>PATHWAY</scope>
</reference>
<keyword id="KW-0521">NADP</keyword>
<keyword id="KW-0547">Nucleotide-binding</keyword>
<keyword id="KW-0560">Oxidoreductase</keyword>
<keyword id="KW-1185">Reference proteome</keyword>
<proteinExistence type="evidence at protein level"/>
<accession>A2QQU5</accession>
<dbReference type="EC" id="1.-.-.-" evidence="4"/>
<dbReference type="EMBL" id="AM270165">
    <property type="protein sequence ID" value="CAK45411.1"/>
    <property type="molecule type" value="Genomic_DNA"/>
</dbReference>
<dbReference type="RefSeq" id="XP_001392491.1">
    <property type="nucleotide sequence ID" value="XM_001392454.1"/>
</dbReference>
<dbReference type="EnsemblFungi" id="CAK45411">
    <property type="protein sequence ID" value="CAK45411"/>
    <property type="gene ID" value="An08g03740"/>
</dbReference>
<dbReference type="GeneID" id="4982689"/>
<dbReference type="KEGG" id="ang:An08g03740"/>
<dbReference type="VEuPathDB" id="FungiDB:An08g03740"/>
<dbReference type="HOGENOM" id="CLU_026673_16_1_1"/>
<dbReference type="OrthoDB" id="2267374at2759"/>
<dbReference type="Proteomes" id="UP000006706">
    <property type="component" value="Chromosome 8R"/>
</dbReference>
<dbReference type="GO" id="GO:0141148">
    <property type="term" value="F:enoyl-[acyl-carrier-protein] reductase (NADPH) activity"/>
    <property type="evidence" value="ECO:0007669"/>
    <property type="project" value="UniProtKB-EC"/>
</dbReference>
<dbReference type="GO" id="GO:0000166">
    <property type="term" value="F:nucleotide binding"/>
    <property type="evidence" value="ECO:0007669"/>
    <property type="project" value="UniProtKB-KW"/>
</dbReference>
<dbReference type="GO" id="GO:0016651">
    <property type="term" value="F:oxidoreductase activity, acting on NAD(P)H"/>
    <property type="evidence" value="ECO:0007669"/>
    <property type="project" value="InterPro"/>
</dbReference>
<dbReference type="CDD" id="cd08249">
    <property type="entry name" value="enoyl_reductase_like"/>
    <property type="match status" value="1"/>
</dbReference>
<dbReference type="Gene3D" id="3.90.180.10">
    <property type="entry name" value="Medium-chain alcohol dehydrogenases, catalytic domain"/>
    <property type="match status" value="1"/>
</dbReference>
<dbReference type="Gene3D" id="3.40.50.720">
    <property type="entry name" value="NAD(P)-binding Rossmann-like Domain"/>
    <property type="match status" value="1"/>
</dbReference>
<dbReference type="InterPro" id="IPR013149">
    <property type="entry name" value="ADH-like_C"/>
</dbReference>
<dbReference type="InterPro" id="IPR013154">
    <property type="entry name" value="ADH-like_N"/>
</dbReference>
<dbReference type="InterPro" id="IPR011032">
    <property type="entry name" value="GroES-like_sf"/>
</dbReference>
<dbReference type="InterPro" id="IPR036291">
    <property type="entry name" value="NAD(P)-bd_dom_sf"/>
</dbReference>
<dbReference type="InterPro" id="IPR020843">
    <property type="entry name" value="PKS_ER"/>
</dbReference>
<dbReference type="InterPro" id="IPR047122">
    <property type="entry name" value="Trans-enoyl_RdTase-like"/>
</dbReference>
<dbReference type="PANTHER" id="PTHR45348">
    <property type="entry name" value="HYPOTHETICAL OXIDOREDUCTASE (EUROFUNG)"/>
    <property type="match status" value="1"/>
</dbReference>
<dbReference type="PANTHER" id="PTHR45348:SF6">
    <property type="entry name" value="TRANS-ENOYL REDUCTASE APDC"/>
    <property type="match status" value="1"/>
</dbReference>
<dbReference type="Pfam" id="PF08240">
    <property type="entry name" value="ADH_N"/>
    <property type="match status" value="1"/>
</dbReference>
<dbReference type="Pfam" id="PF00107">
    <property type="entry name" value="ADH_zinc_N"/>
    <property type="match status" value="1"/>
</dbReference>
<dbReference type="SMART" id="SM00829">
    <property type="entry name" value="PKS_ER"/>
    <property type="match status" value="1"/>
</dbReference>
<dbReference type="SUPFAM" id="SSF50129">
    <property type="entry name" value="GroES-like"/>
    <property type="match status" value="1"/>
</dbReference>
<dbReference type="SUPFAM" id="SSF51735">
    <property type="entry name" value="NAD(P)-binding Rossmann-fold domains"/>
    <property type="match status" value="1"/>
</dbReference>
<protein>
    <recommendedName>
        <fullName evidence="5">Trans-enoyl reductase caaB</fullName>
        <ecNumber evidence="4">1.-.-.-</ecNumber>
    </recommendedName>
    <alternativeName>
        <fullName evidence="5">Carlosic acid biosynthesis cluster protein B</fullName>
    </alternativeName>
</protein>
<organism>
    <name type="scientific">Aspergillus niger (strain ATCC MYA-4892 / CBS 513.88 / FGSC A1513)</name>
    <dbReference type="NCBI Taxonomy" id="425011"/>
    <lineage>
        <taxon>Eukaryota</taxon>
        <taxon>Fungi</taxon>
        <taxon>Dikarya</taxon>
        <taxon>Ascomycota</taxon>
        <taxon>Pezizomycotina</taxon>
        <taxon>Eurotiomycetes</taxon>
        <taxon>Eurotiomycetidae</taxon>
        <taxon>Eurotiales</taxon>
        <taxon>Aspergillaceae</taxon>
        <taxon>Aspergillus</taxon>
        <taxon>Aspergillus subgen. Circumdati</taxon>
    </lineage>
</organism>
<evidence type="ECO:0000250" key="1">
    <source>
        <dbReference type="UniProtKB" id="A0A0E0RXA7"/>
    </source>
</evidence>
<evidence type="ECO:0000250" key="2">
    <source>
        <dbReference type="UniProtKB" id="Q9Y7D0"/>
    </source>
</evidence>
<evidence type="ECO:0000255" key="3"/>
<evidence type="ECO:0000269" key="4">
    <source>
    </source>
</evidence>
<evidence type="ECO:0000303" key="5">
    <source>
    </source>
</evidence>
<evidence type="ECO:0000305" key="6"/>
<comment type="function">
    <text evidence="4">Trans-enoyl reductase; part of the gene cluster that produces the acyltetronic acid derivatives carlosic acid, agglomerin F and carlosic acid methyl ether (PubMed:25044953). The PKS domains of caaA condenses two malonyl-CoAs into an acetyl starter unit, and form 1,3-diketohexanyl-ACP with the help of the trans-enoyl reductase caaB. Next, the C domain of caaA forms the ester bond between the acyl chain and L-malic acid (derived from the TCA cycle) and accepted by the A domain instead of an amino acid. Finally, the terminal reductase/Dieckmann cyclization (R/DKC) domain cyclizes the intermediate and releases the product as carlosic acid (PubMed:25044953). Decarboxylation of carlosic acid followed by formation of the exocyclic double bond is likely to be catalyzed by the cytochrome P450 monooxygenase caaC. Thus, decarboxylation and oxidation would be coupled (performed by one enzyme) through concomitant abstraction of the hydrogen at C-4. Finally, sequential oxidations of the terminal C-10 methyl group to form carboxylic acid would be catalyzed by the 2-oxoglutarate-dependent dioxygenase caaD, which is required for the biosynthesis of agglomerin F (PubMed:25044953).</text>
</comment>
<comment type="pathway">
    <text evidence="1">Secondary metabolite biosynthesis.</text>
</comment>
<comment type="subunit">
    <text evidence="2">Monomer.</text>
</comment>
<comment type="induction">
    <text evidence="4">Expression is positively regulated by the cluster-specific transcription factor caaR.</text>
</comment>
<comment type="similarity">
    <text evidence="6">Belongs to the zinc-containing alcohol dehydrogenase family.</text>
</comment>
<name>CAAB_ASPNC</name>